<comment type="function">
    <text evidence="1">Responsible for the deacetylation of lysine residues on the N-terminal part of the core histones (H2A, H2B, H3 and H4). Histone deacetylation gives a tag for epigenetic repression and plays an important role in transcriptional regulation, cell cycle progression and developmental events. Histone deacetylases act via the formation of large multiprotein complexes (By similarity).</text>
</comment>
<comment type="catalytic activity">
    <reaction>
        <text>N(6)-acetyl-L-lysyl-[histone] + H2O = L-lysyl-[histone] + acetate</text>
        <dbReference type="Rhea" id="RHEA:58196"/>
        <dbReference type="Rhea" id="RHEA-COMP:9845"/>
        <dbReference type="Rhea" id="RHEA-COMP:11338"/>
        <dbReference type="ChEBI" id="CHEBI:15377"/>
        <dbReference type="ChEBI" id="CHEBI:29969"/>
        <dbReference type="ChEBI" id="CHEBI:30089"/>
        <dbReference type="ChEBI" id="CHEBI:61930"/>
        <dbReference type="EC" id="3.5.1.98"/>
    </reaction>
</comment>
<comment type="subcellular location">
    <subcellularLocation>
        <location evidence="1">Nucleus</location>
    </subcellularLocation>
</comment>
<comment type="similarity">
    <text evidence="3">Belongs to the histone deacetylase family. HD type 2 subfamily.</text>
</comment>
<protein>
    <recommendedName>
        <fullName>Histone deacetylase 4</fullName>
        <ecNumber>3.5.1.98</ecNumber>
    </recommendedName>
</protein>
<keyword id="KW-0156">Chromatin regulator</keyword>
<keyword id="KW-0378">Hydrolase</keyword>
<keyword id="KW-0539">Nucleus</keyword>
<keyword id="KW-1185">Reference proteome</keyword>
<keyword id="KW-0678">Repressor</keyword>
<keyword id="KW-0804">Transcription</keyword>
<keyword id="KW-0805">Transcription regulation</keyword>
<accession>Q613L4</accession>
<accession>A8XNN9</accession>
<gene>
    <name type="primary">hda-4</name>
    <name type="ORF">CBG16328</name>
</gene>
<reference key="1">
    <citation type="journal article" date="2003" name="PLoS Biol.">
        <title>The genome sequence of Caenorhabditis briggsae: a platform for comparative genomics.</title>
        <authorList>
            <person name="Stein L.D."/>
            <person name="Bao Z."/>
            <person name="Blasiar D."/>
            <person name="Blumenthal T."/>
            <person name="Brent M.R."/>
            <person name="Chen N."/>
            <person name="Chinwalla A."/>
            <person name="Clarke L."/>
            <person name="Clee C."/>
            <person name="Coghlan A."/>
            <person name="Coulson A."/>
            <person name="D'Eustachio P."/>
            <person name="Fitch D.H.A."/>
            <person name="Fulton L.A."/>
            <person name="Fulton R.E."/>
            <person name="Griffiths-Jones S."/>
            <person name="Harris T.W."/>
            <person name="Hillier L.W."/>
            <person name="Kamath R."/>
            <person name="Kuwabara P.E."/>
            <person name="Mardis E.R."/>
            <person name="Marra M.A."/>
            <person name="Miner T.L."/>
            <person name="Minx P."/>
            <person name="Mullikin J.C."/>
            <person name="Plumb R.W."/>
            <person name="Rogers J."/>
            <person name="Schein J.E."/>
            <person name="Sohrmann M."/>
            <person name="Spieth J."/>
            <person name="Stajich J.E."/>
            <person name="Wei C."/>
            <person name="Willey D."/>
            <person name="Wilson R.K."/>
            <person name="Durbin R.M."/>
            <person name="Waterston R.H."/>
        </authorList>
    </citation>
    <scope>NUCLEOTIDE SEQUENCE [LARGE SCALE GENOMIC DNA]</scope>
    <source>
        <strain>AF16</strain>
    </source>
</reference>
<proteinExistence type="inferred from homology"/>
<dbReference type="EC" id="3.5.1.98"/>
<dbReference type="EMBL" id="HE600961">
    <property type="protein sequence ID" value="CAP34128.1"/>
    <property type="molecule type" value="Genomic_DNA"/>
</dbReference>
<dbReference type="SMR" id="Q613L4"/>
<dbReference type="FunCoup" id="Q613L4">
    <property type="interactions" value="24"/>
</dbReference>
<dbReference type="STRING" id="6238.Q613L4"/>
<dbReference type="KEGG" id="cbr:CBG_16328"/>
<dbReference type="CTD" id="8585593"/>
<dbReference type="WormBase" id="CBG16328">
    <property type="protein sequence ID" value="CBP46312"/>
    <property type="gene ID" value="WBGene00036299"/>
    <property type="gene designation" value="Cbr-hda-4"/>
</dbReference>
<dbReference type="eggNOG" id="KOG1343">
    <property type="taxonomic scope" value="Eukaryota"/>
</dbReference>
<dbReference type="HOGENOM" id="CLU_006530_0_0_1"/>
<dbReference type="InParanoid" id="Q613L4"/>
<dbReference type="OMA" id="QKVIAIH"/>
<dbReference type="Proteomes" id="UP000008549">
    <property type="component" value="Unassembled WGS sequence"/>
</dbReference>
<dbReference type="GO" id="GO:0000118">
    <property type="term" value="C:histone deacetylase complex"/>
    <property type="evidence" value="ECO:0000318"/>
    <property type="project" value="GO_Central"/>
</dbReference>
<dbReference type="GO" id="GO:0004407">
    <property type="term" value="F:histone deacetylase activity"/>
    <property type="evidence" value="ECO:0000318"/>
    <property type="project" value="GO_Central"/>
</dbReference>
<dbReference type="GO" id="GO:0141221">
    <property type="term" value="F:histone deacetylase activity, hydrolytic mechanism"/>
    <property type="evidence" value="ECO:0007669"/>
    <property type="project" value="UniProtKB-EC"/>
</dbReference>
<dbReference type="GO" id="GO:0040029">
    <property type="term" value="P:epigenetic regulation of gene expression"/>
    <property type="evidence" value="ECO:0000318"/>
    <property type="project" value="GO_Central"/>
</dbReference>
<dbReference type="Gene3D" id="3.40.800.20">
    <property type="entry name" value="Histone deacetylase domain"/>
    <property type="match status" value="1"/>
</dbReference>
<dbReference type="InterPro" id="IPR050284">
    <property type="entry name" value="HDAC_PDAC"/>
</dbReference>
<dbReference type="InterPro" id="IPR000286">
    <property type="entry name" value="His_deacetylse"/>
</dbReference>
<dbReference type="InterPro" id="IPR023801">
    <property type="entry name" value="His_deacetylse_dom"/>
</dbReference>
<dbReference type="InterPro" id="IPR037138">
    <property type="entry name" value="His_deacetylse_dom_sf"/>
</dbReference>
<dbReference type="InterPro" id="IPR023696">
    <property type="entry name" value="Ureohydrolase_dom_sf"/>
</dbReference>
<dbReference type="PANTHER" id="PTHR10625:SF5">
    <property type="entry name" value="HISTONE DEACETYLASE"/>
    <property type="match status" value="1"/>
</dbReference>
<dbReference type="PANTHER" id="PTHR10625">
    <property type="entry name" value="HISTONE DEACETYLASE HDAC1-RELATED"/>
    <property type="match status" value="1"/>
</dbReference>
<dbReference type="Pfam" id="PF00850">
    <property type="entry name" value="Hist_deacetyl"/>
    <property type="match status" value="1"/>
</dbReference>
<dbReference type="PRINTS" id="PR01270">
    <property type="entry name" value="HDASUPER"/>
</dbReference>
<dbReference type="SUPFAM" id="SSF52768">
    <property type="entry name" value="Arginase/deacetylase"/>
    <property type="match status" value="1"/>
</dbReference>
<sequence>MAFFSSSSSSFPVVFARMEEASSSTGSTGGAMAGIPVIPSTSAALLANTNLEPERIAVLQTQLQEYRQKQMDLIGHFQRAQQELSVQHMHNLYTALQQQQQLQSLQERSGINPMLISQTSEDATSGPAAPLSLANSLTNLLSSSNGNLSNLSVPQTPTKEHHPTLPPQQPSAPTSSRKSDLPRTNSTTISQLTKDRLKNMIANRSKGESNSQSNLMSNVNGHDNSRRLKNSNSQMNVSSPHFEPYRLPTSLANAHNLQQASEFQLRKVNSEPNLKMKIRAKLLSKGNSPVQHVQQTNNSQFSFTHPQLKRSDSETSNMPIDMLPSGSHSNIPHLMLPSPSLPNLAAATGAFQNLNLPIGQDLTAFMAVANLSPFLSLPSLLNKKLELGGMTDEGDRNGFSSSASNSSLASNASLGSHQYQSLLKQQIRDLVLRRKSLVREDPEGEGMAESYNGLFSHAKLQQLTALAMESGFNPKLEPTFSTGLGYDPLMARHECVCSNNSNHVENGERIQRIWSKLTEEGHVAKCERITAKKASLEQLQMVHSQTYTTFFAVSPTACLKIDANALPLKRFLQLPCGGIGIDSDTYFNDASTQIAARLAAGTLIELSSQVAEGRLKNGFACIRPPGHHAEAEQALGFCFFNNVAVTAKVLQAKYPVQCAKIAIIDWDVHHGNGTQLSFDDDPNVLYMSLHRHDNGNFFPGTGSVTEIGKGAGKGFSVNIPFSGGVMKDAEYLAAWRTVVEPVLASFCPDFILVSAGFDACHGHVNALGGYEITPEMFGYMTKCLLSYANGKVVLALEGGYNLDSISAAAEQCVQALIGESDDAGRLCTDSLENLPNQSALETLQKVIAIHKGFWPALHGQEAAINTTEMQWRNVKLQVQMQQQQQLQQQLQQ</sequence>
<name>HDA4_CAEBR</name>
<organism>
    <name type="scientific">Caenorhabditis briggsae</name>
    <dbReference type="NCBI Taxonomy" id="6238"/>
    <lineage>
        <taxon>Eukaryota</taxon>
        <taxon>Metazoa</taxon>
        <taxon>Ecdysozoa</taxon>
        <taxon>Nematoda</taxon>
        <taxon>Chromadorea</taxon>
        <taxon>Rhabditida</taxon>
        <taxon>Rhabditina</taxon>
        <taxon>Rhabditomorpha</taxon>
        <taxon>Rhabditoidea</taxon>
        <taxon>Rhabditidae</taxon>
        <taxon>Peloderinae</taxon>
        <taxon>Caenorhabditis</taxon>
    </lineage>
</organism>
<feature type="chain" id="PRO_0000114741" description="Histone deacetylase 4">
    <location>
        <begin position="1"/>
        <end position="892"/>
    </location>
</feature>
<feature type="region of interest" description="Disordered" evidence="2">
    <location>
        <begin position="145"/>
        <end position="225"/>
    </location>
</feature>
<feature type="region of interest" description="Histone deacetylase">
    <location>
        <begin position="481"/>
        <end position="822"/>
    </location>
</feature>
<feature type="compositionally biased region" description="Polar residues" evidence="2">
    <location>
        <begin position="171"/>
        <end position="192"/>
    </location>
</feature>
<feature type="compositionally biased region" description="Polar residues" evidence="2">
    <location>
        <begin position="208"/>
        <end position="222"/>
    </location>
</feature>
<feature type="active site" evidence="1">
    <location>
        <position position="628"/>
    </location>
</feature>
<evidence type="ECO:0000250" key="1"/>
<evidence type="ECO:0000256" key="2">
    <source>
        <dbReference type="SAM" id="MobiDB-lite"/>
    </source>
</evidence>
<evidence type="ECO:0000305" key="3"/>